<accession>Q9PK47</accession>
<organism>
    <name type="scientific">Chlamydia muridarum (strain MoPn / Nigg)</name>
    <dbReference type="NCBI Taxonomy" id="243161"/>
    <lineage>
        <taxon>Bacteria</taxon>
        <taxon>Pseudomonadati</taxon>
        <taxon>Chlamydiota</taxon>
        <taxon>Chlamydiia</taxon>
        <taxon>Chlamydiales</taxon>
        <taxon>Chlamydiaceae</taxon>
        <taxon>Chlamydia/Chlamydophila group</taxon>
        <taxon>Chlamydia</taxon>
    </lineage>
</organism>
<evidence type="ECO:0000255" key="1">
    <source>
        <dbReference type="HAMAP-Rule" id="MF_01808"/>
    </source>
</evidence>
<evidence type="ECO:0000255" key="2">
    <source>
        <dbReference type="PROSITE-ProRule" id="PRU01246"/>
    </source>
</evidence>
<evidence type="ECO:0000255" key="3">
    <source>
        <dbReference type="PROSITE-ProRule" id="PRU01248"/>
    </source>
</evidence>
<feature type="chain" id="PRO_0000095288" description="Tyrosine recombinase XerC">
    <location>
        <begin position="1"/>
        <end position="315"/>
    </location>
</feature>
<feature type="domain" description="Core-binding (CB)" evidence="3">
    <location>
        <begin position="1"/>
        <end position="103"/>
    </location>
</feature>
<feature type="domain" description="Tyr recombinase" evidence="2">
    <location>
        <begin position="124"/>
        <end position="306"/>
    </location>
</feature>
<feature type="active site" evidence="1">
    <location>
        <position position="164"/>
    </location>
</feature>
<feature type="active site" evidence="1">
    <location>
        <position position="188"/>
    </location>
</feature>
<feature type="active site" evidence="1">
    <location>
        <position position="258"/>
    </location>
</feature>
<feature type="active site" evidence="1">
    <location>
        <position position="261"/>
    </location>
</feature>
<feature type="active site" evidence="1">
    <location>
        <position position="284"/>
    </location>
</feature>
<feature type="active site" description="O-(3'-phospho-DNA)-tyrosine intermediate" evidence="1">
    <location>
        <position position="293"/>
    </location>
</feature>
<comment type="function">
    <text evidence="1">Site-specific tyrosine recombinase, which acts by catalyzing the cutting and rejoining of the recombining DNA molecules. The XerC-XerD complex is essential to convert dimers of the bacterial chromosome into monomers to permit their segregation at cell division. It also contributes to the segregational stability of plasmids.</text>
</comment>
<comment type="subunit">
    <text evidence="1">Forms a cyclic heterotetrameric complex composed of two molecules of XerC and two molecules of XerD.</text>
</comment>
<comment type="subcellular location">
    <subcellularLocation>
        <location evidence="1">Cytoplasm</location>
    </subcellularLocation>
</comment>
<comment type="similarity">
    <text evidence="1">Belongs to the 'phage' integrase family. XerC subfamily.</text>
</comment>
<sequence>MIASFYAFLDYLKNMKAASPHTLRNYSIDLSSLKCFLEKKGELTPTPPLSLQEDSRSSSQLSFSLFTKENIRLYLLEQIQTTHSKRTVRRRLSAIKSFAKFCVKNQWIPENPAEMIRGPRLPKELPSPLTYEQVLALMSAPDLDKVTGFRDRCLLELFYSSGLRISEITALNRSDIDFQSNLLRICGKGKKERIVPMTKVAVQWLQAYLDHPDRAAVEQDHQACFLNRFGKRLSTRSIDRKFQQYLLKTGLSGTITPHTIRHTIATHWLERGMDLKTIQLLLGHTSLETTTIYTHVSMKLKKQIHDEAHPHNLED</sequence>
<gene>
    <name evidence="1" type="primary">xerC</name>
    <name type="ordered locus">TC_0626</name>
</gene>
<reference key="1">
    <citation type="journal article" date="2000" name="Nucleic Acids Res.">
        <title>Genome sequences of Chlamydia trachomatis MoPn and Chlamydia pneumoniae AR39.</title>
        <authorList>
            <person name="Read T.D."/>
            <person name="Brunham R.C."/>
            <person name="Shen C."/>
            <person name="Gill S.R."/>
            <person name="Heidelberg J.F."/>
            <person name="White O."/>
            <person name="Hickey E.K."/>
            <person name="Peterson J.D."/>
            <person name="Utterback T.R."/>
            <person name="Berry K.J."/>
            <person name="Bass S."/>
            <person name="Linher K.D."/>
            <person name="Weidman J.F."/>
            <person name="Khouri H.M."/>
            <person name="Craven B."/>
            <person name="Bowman C."/>
            <person name="Dodson R.J."/>
            <person name="Gwinn M.L."/>
            <person name="Nelson W.C."/>
            <person name="DeBoy R.T."/>
            <person name="Kolonay J.F."/>
            <person name="McClarty G."/>
            <person name="Salzberg S.L."/>
            <person name="Eisen J.A."/>
            <person name="Fraser C.M."/>
        </authorList>
    </citation>
    <scope>NUCLEOTIDE SEQUENCE [LARGE SCALE GENOMIC DNA]</scope>
    <source>
        <strain>MoPn / Nigg</strain>
    </source>
</reference>
<dbReference type="EMBL" id="AE002160">
    <property type="protein sequence ID" value="AAF73578.1"/>
    <property type="molecule type" value="Genomic_DNA"/>
</dbReference>
<dbReference type="RefSeq" id="WP_010231047.1">
    <property type="nucleotide sequence ID" value="NZ_CP027217.1"/>
</dbReference>
<dbReference type="SMR" id="Q9PK47"/>
<dbReference type="GeneID" id="1245986"/>
<dbReference type="KEGG" id="cmu:TC_0626"/>
<dbReference type="eggNOG" id="COG4974">
    <property type="taxonomic scope" value="Bacteria"/>
</dbReference>
<dbReference type="HOGENOM" id="CLU_027562_9_0_0"/>
<dbReference type="OrthoDB" id="9801717at2"/>
<dbReference type="Proteomes" id="UP000000800">
    <property type="component" value="Chromosome"/>
</dbReference>
<dbReference type="GO" id="GO:0005737">
    <property type="term" value="C:cytoplasm"/>
    <property type="evidence" value="ECO:0007669"/>
    <property type="project" value="UniProtKB-SubCell"/>
</dbReference>
<dbReference type="GO" id="GO:0003677">
    <property type="term" value="F:DNA binding"/>
    <property type="evidence" value="ECO:0007669"/>
    <property type="project" value="UniProtKB-KW"/>
</dbReference>
<dbReference type="GO" id="GO:0009037">
    <property type="term" value="F:tyrosine-based site-specific recombinase activity"/>
    <property type="evidence" value="ECO:0007669"/>
    <property type="project" value="UniProtKB-UniRule"/>
</dbReference>
<dbReference type="GO" id="GO:0051301">
    <property type="term" value="P:cell division"/>
    <property type="evidence" value="ECO:0007669"/>
    <property type="project" value="UniProtKB-KW"/>
</dbReference>
<dbReference type="GO" id="GO:0007059">
    <property type="term" value="P:chromosome segregation"/>
    <property type="evidence" value="ECO:0007669"/>
    <property type="project" value="UniProtKB-UniRule"/>
</dbReference>
<dbReference type="GO" id="GO:0006313">
    <property type="term" value="P:DNA transposition"/>
    <property type="evidence" value="ECO:0007669"/>
    <property type="project" value="UniProtKB-UniRule"/>
</dbReference>
<dbReference type="CDD" id="cd00798">
    <property type="entry name" value="INT_XerDC_C"/>
    <property type="match status" value="1"/>
</dbReference>
<dbReference type="Gene3D" id="1.10.150.130">
    <property type="match status" value="1"/>
</dbReference>
<dbReference type="Gene3D" id="1.10.443.10">
    <property type="entry name" value="Intergrase catalytic core"/>
    <property type="match status" value="1"/>
</dbReference>
<dbReference type="HAMAP" id="MF_01808">
    <property type="entry name" value="Recomb_XerC_XerD"/>
    <property type="match status" value="1"/>
</dbReference>
<dbReference type="InterPro" id="IPR044068">
    <property type="entry name" value="CB"/>
</dbReference>
<dbReference type="InterPro" id="IPR011010">
    <property type="entry name" value="DNA_brk_join_enz"/>
</dbReference>
<dbReference type="InterPro" id="IPR013762">
    <property type="entry name" value="Integrase-like_cat_sf"/>
</dbReference>
<dbReference type="InterPro" id="IPR002104">
    <property type="entry name" value="Integrase_catalytic"/>
</dbReference>
<dbReference type="InterPro" id="IPR010998">
    <property type="entry name" value="Integrase_recombinase_N"/>
</dbReference>
<dbReference type="InterPro" id="IPR004107">
    <property type="entry name" value="Integrase_SAM-like_N"/>
</dbReference>
<dbReference type="InterPro" id="IPR011931">
    <property type="entry name" value="Recomb_XerC"/>
</dbReference>
<dbReference type="InterPro" id="IPR023009">
    <property type="entry name" value="Tyrosine_recombinase_XerC/XerD"/>
</dbReference>
<dbReference type="InterPro" id="IPR050090">
    <property type="entry name" value="Tyrosine_recombinase_XerCD"/>
</dbReference>
<dbReference type="NCBIfam" id="TIGR02224">
    <property type="entry name" value="recomb_XerC"/>
    <property type="match status" value="1"/>
</dbReference>
<dbReference type="PANTHER" id="PTHR30349">
    <property type="entry name" value="PHAGE INTEGRASE-RELATED"/>
    <property type="match status" value="1"/>
</dbReference>
<dbReference type="PANTHER" id="PTHR30349:SF77">
    <property type="entry name" value="TYROSINE RECOMBINASE XERC"/>
    <property type="match status" value="1"/>
</dbReference>
<dbReference type="Pfam" id="PF02899">
    <property type="entry name" value="Phage_int_SAM_1"/>
    <property type="match status" value="1"/>
</dbReference>
<dbReference type="Pfam" id="PF00589">
    <property type="entry name" value="Phage_integrase"/>
    <property type="match status" value="1"/>
</dbReference>
<dbReference type="SUPFAM" id="SSF56349">
    <property type="entry name" value="DNA breaking-rejoining enzymes"/>
    <property type="match status" value="1"/>
</dbReference>
<dbReference type="PROSITE" id="PS51900">
    <property type="entry name" value="CB"/>
    <property type="match status" value="1"/>
</dbReference>
<dbReference type="PROSITE" id="PS51898">
    <property type="entry name" value="TYR_RECOMBINASE"/>
    <property type="match status" value="1"/>
</dbReference>
<keyword id="KW-0131">Cell cycle</keyword>
<keyword id="KW-0132">Cell division</keyword>
<keyword id="KW-0159">Chromosome partition</keyword>
<keyword id="KW-0963">Cytoplasm</keyword>
<keyword id="KW-0229">DNA integration</keyword>
<keyword id="KW-0233">DNA recombination</keyword>
<keyword id="KW-0238">DNA-binding</keyword>
<proteinExistence type="inferred from homology"/>
<protein>
    <recommendedName>
        <fullName evidence="1">Tyrosine recombinase XerC</fullName>
    </recommendedName>
</protein>
<name>XERC_CHLMU</name>